<name>BIK3_GIBF5</name>
<proteinExistence type="evidence at transcript level"/>
<protein>
    <recommendedName>
        <fullName evidence="6">O-methyltransferase bik3</fullName>
        <ecNumber evidence="4">2.1.1.-</ecNumber>
    </recommendedName>
    <alternativeName>
        <fullName evidence="5">Bikaverin biosynthesis protein 3</fullName>
    </alternativeName>
</protein>
<evidence type="ECO:0000255" key="1">
    <source>
        <dbReference type="PROSITE-ProRule" id="PRU01020"/>
    </source>
</evidence>
<evidence type="ECO:0000256" key="2">
    <source>
        <dbReference type="SAM" id="MobiDB-lite"/>
    </source>
</evidence>
<evidence type="ECO:0000269" key="3">
    <source>
    </source>
</evidence>
<evidence type="ECO:0000269" key="4">
    <source>
    </source>
</evidence>
<evidence type="ECO:0000303" key="5">
    <source>
    </source>
</evidence>
<evidence type="ECO:0000305" key="6"/>
<keyword id="KW-0489">Methyltransferase</keyword>
<keyword id="KW-1185">Reference proteome</keyword>
<keyword id="KW-0949">S-adenosyl-L-methionine</keyword>
<keyword id="KW-0808">Transferase</keyword>
<accession>S0E608</accession>
<reference key="1">
    <citation type="journal article" date="2013" name="PLoS Pathog.">
        <title>Deciphering the cryptic genome: genome-wide analyses of the rice pathogen Fusarium fujikuroi reveal complex regulation of secondary metabolism and novel metabolites.</title>
        <authorList>
            <person name="Wiemann P."/>
            <person name="Sieber C.M.K."/>
            <person name="von Bargen K.W."/>
            <person name="Studt L."/>
            <person name="Niehaus E.-M."/>
            <person name="Espino J.J."/>
            <person name="Huss K."/>
            <person name="Michielse C.B."/>
            <person name="Albermann S."/>
            <person name="Wagner D."/>
            <person name="Bergner S.V."/>
            <person name="Connolly L.R."/>
            <person name="Fischer A."/>
            <person name="Reuter G."/>
            <person name="Kleigrewe K."/>
            <person name="Bald T."/>
            <person name="Wingfield B.D."/>
            <person name="Ophir R."/>
            <person name="Freeman S."/>
            <person name="Hippler M."/>
            <person name="Smith K.M."/>
            <person name="Brown D.W."/>
            <person name="Proctor R.H."/>
            <person name="Muensterkoetter M."/>
            <person name="Freitag M."/>
            <person name="Humpf H.-U."/>
            <person name="Gueldener U."/>
            <person name="Tudzynski B."/>
        </authorList>
    </citation>
    <scope>NUCLEOTIDE SEQUENCE [LARGE SCALE GENOMIC DNA]</scope>
    <source>
        <strain>CBS 195.34 / IMI 58289 / NRRL A-6831</strain>
    </source>
</reference>
<reference key="2">
    <citation type="journal article" date="2009" name="Mol. Microbiol.">
        <title>Biosynthesis of the red pigment bikaverin in Fusarium fujikuroi: genes, their function and regulation.</title>
        <authorList>
            <person name="Wiemann P."/>
            <person name="Willmann A."/>
            <person name="Straeten M."/>
            <person name="Kleigrewe K."/>
            <person name="Beyer M."/>
            <person name="Humpf H.U."/>
            <person name="Tudzynski B."/>
        </authorList>
    </citation>
    <scope>FUNCTION</scope>
    <scope>INDUCTION</scope>
    <scope>DISRUPTION PHENOTYPE</scope>
</reference>
<reference key="3">
    <citation type="journal article" date="2015" name="Fungal Genet. Biol.">
        <title>Genetic engineering, high resolution mass spectrometry and nuclear magnetic resonance spectroscopy elucidate the bikaverin biosynthetic pathway in Fusarium fujikuroi.</title>
        <authorList>
            <person name="Arndt B."/>
            <person name="Studt L."/>
            <person name="Wiemann P."/>
            <person name="Osmanov H."/>
            <person name="Kleigrewe K."/>
            <person name="Koehler J."/>
            <person name="Krug I."/>
            <person name="Tudzynski B."/>
            <person name="Humpf H.U."/>
        </authorList>
    </citation>
    <scope>FUNCTION</scope>
    <scope>DISRUPTION PHENOTYPE</scope>
</reference>
<comment type="function">
    <text evidence="3 4">O-methyltransferase; part of the gene cluster that mediates the biosynthesis of bikaverin, a red pigment also considered as a mycotoxin (PubMed:19400779). The first stage is catalyzed by the polyketide synthase bik1, which catalyzes the formation of the intermediate SMA76a also knowm as pre-bikaverin (PubMed:19400779). FAD-dependent monooxygenase bik2 might then be responsible for the oxidation of pre-bikaverin to oxo-pre-bikaverin which is in turn methylated by the O-methyltransferase bik3 to me-oxo-pre-bikaverin (PubMed:26382642). A further cycle of oxydation and methylation by bik2 and bik3 leads to the final product of bikaverin, via a nor-bikaverin intermediate (PubMed:19400779, PubMed:26382642).</text>
</comment>
<comment type="pathway">
    <text evidence="3 4">Secondary metabolite biosynthesis.</text>
</comment>
<comment type="induction">
    <text evidence="3">Expression is repressed by glutamine and at alkaline ambient pH and highly induced under nitrogen starvation and acidic pH conditions (PubMed:19400779).</text>
</comment>
<comment type="disruption phenotype">
    <text evidence="3 4">Impairs the production of bikaverin (PubMed:19400779). Leads to the accumulation of the intermediate oxo-pre-bikaverin (PubMed:26382642).</text>
</comment>
<comment type="similarity">
    <text evidence="6">Belongs to the class I-like SAM-binding methyltransferase superfamily. Cation-independent O-methyltransferase family. COMT subfamily.</text>
</comment>
<sequence>MVSNGISNGTNGTNGTTTNGTNGVNGHAALSPLEVLVQDLNKNTTTLNGYLRANKLPEPSFERDAPIINLSPDAPEEAQVAKEKVLDSALQIFQLVSGPGEYLQNVITGYHYMEILRWMSHFKIFELVPLEGKISYTELASKAGVAELRLKTLARMGMTNHLFAEPEPGFIAHSATSAALVTNNRFSDQRVWMTSIIAPVIASMVTAHERWPDSTAPNKAAFNAAFNTDLRMYEYISKQPDVYKLFGRVMDAIATSPKSDLKHLVSGFDWAGLGKANVVDIGGNIGHSCVKLAEAFPDLNFIIQDIPHVVEEGAKVIKENNEASIANRIQFQEYDFFQKQPVVGADIYLLRQIFHNWDFENSVKILKNTVESMGQNSHVLIMDFVVPEPGTVSSVNERVLRSRDVGMMQLFNSLERDLEGWKAILEAVDSRLKINAVNTPYGSFMSVIDVVLG</sequence>
<organism>
    <name type="scientific">Gibberella fujikuroi (strain CBS 195.34 / IMI 58289 / NRRL A-6831)</name>
    <name type="common">Bakanae and foot rot disease fungus</name>
    <name type="synonym">Fusarium fujikuroi</name>
    <dbReference type="NCBI Taxonomy" id="1279085"/>
    <lineage>
        <taxon>Eukaryota</taxon>
        <taxon>Fungi</taxon>
        <taxon>Dikarya</taxon>
        <taxon>Ascomycota</taxon>
        <taxon>Pezizomycotina</taxon>
        <taxon>Sordariomycetes</taxon>
        <taxon>Hypocreomycetidae</taxon>
        <taxon>Hypocreales</taxon>
        <taxon>Nectriaceae</taxon>
        <taxon>Fusarium</taxon>
        <taxon>Fusarium fujikuroi species complex</taxon>
    </lineage>
</organism>
<gene>
    <name evidence="5" type="primary">bik3</name>
    <name type="ORF">FFUJ_06744</name>
</gene>
<feature type="chain" id="PRO_0000436340" description="O-methyltransferase bik3">
    <location>
        <begin position="1"/>
        <end position="453"/>
    </location>
</feature>
<feature type="region of interest" description="Disordered" evidence="2">
    <location>
        <begin position="1"/>
        <end position="25"/>
    </location>
</feature>
<feature type="compositionally biased region" description="Low complexity" evidence="2">
    <location>
        <begin position="8"/>
        <end position="25"/>
    </location>
</feature>
<feature type="active site" description="Proton acceptor" evidence="1">
    <location>
        <position position="355"/>
    </location>
</feature>
<feature type="binding site" evidence="1">
    <location>
        <position position="305"/>
    </location>
    <ligand>
        <name>S-adenosyl-L-methionine</name>
        <dbReference type="ChEBI" id="CHEBI:59789"/>
    </ligand>
</feature>
<dbReference type="EC" id="2.1.1.-" evidence="4"/>
<dbReference type="EMBL" id="HF679027">
    <property type="protein sequence ID" value="CCT67993.1"/>
    <property type="molecule type" value="Genomic_DNA"/>
</dbReference>
<dbReference type="SMR" id="S0E608"/>
<dbReference type="STRING" id="1279085.S0E608"/>
<dbReference type="EnsemblFungi" id="CCT67993">
    <property type="protein sequence ID" value="CCT67993"/>
    <property type="gene ID" value="FFUJ_06744"/>
</dbReference>
<dbReference type="VEuPathDB" id="FungiDB:FFUJ_06744"/>
<dbReference type="HOGENOM" id="CLU_005533_1_4_1"/>
<dbReference type="Proteomes" id="UP000016800">
    <property type="component" value="Chromosome 5"/>
</dbReference>
<dbReference type="GO" id="GO:0008171">
    <property type="term" value="F:O-methyltransferase activity"/>
    <property type="evidence" value="ECO:0007669"/>
    <property type="project" value="InterPro"/>
</dbReference>
<dbReference type="GO" id="GO:0032259">
    <property type="term" value="P:methylation"/>
    <property type="evidence" value="ECO:0007669"/>
    <property type="project" value="UniProtKB-KW"/>
</dbReference>
<dbReference type="GO" id="GO:0044550">
    <property type="term" value="P:secondary metabolite biosynthetic process"/>
    <property type="evidence" value="ECO:0007669"/>
    <property type="project" value="UniProtKB-ARBA"/>
</dbReference>
<dbReference type="Gene3D" id="3.40.50.150">
    <property type="entry name" value="Vaccinia Virus protein VP39"/>
    <property type="match status" value="1"/>
</dbReference>
<dbReference type="Gene3D" id="1.10.10.10">
    <property type="entry name" value="Winged helix-like DNA-binding domain superfamily/Winged helix DNA-binding domain"/>
    <property type="match status" value="1"/>
</dbReference>
<dbReference type="InterPro" id="IPR016461">
    <property type="entry name" value="COMT-like"/>
</dbReference>
<dbReference type="InterPro" id="IPR001077">
    <property type="entry name" value="O_MeTrfase_dom"/>
</dbReference>
<dbReference type="InterPro" id="IPR029063">
    <property type="entry name" value="SAM-dependent_MTases_sf"/>
</dbReference>
<dbReference type="InterPro" id="IPR036388">
    <property type="entry name" value="WH-like_DNA-bd_sf"/>
</dbReference>
<dbReference type="InterPro" id="IPR036390">
    <property type="entry name" value="WH_DNA-bd_sf"/>
</dbReference>
<dbReference type="PANTHER" id="PTHR43712:SF19">
    <property type="entry name" value="DUAL O-METHYLTRANSFERASE_FAD-DEPENDENT MONOOXYGENASE ELCB"/>
    <property type="match status" value="1"/>
</dbReference>
<dbReference type="PANTHER" id="PTHR43712">
    <property type="entry name" value="PUTATIVE (AFU_ORTHOLOGUE AFUA_4G14580)-RELATED"/>
    <property type="match status" value="1"/>
</dbReference>
<dbReference type="Pfam" id="PF00891">
    <property type="entry name" value="Methyltransf_2"/>
    <property type="match status" value="1"/>
</dbReference>
<dbReference type="SUPFAM" id="SSF53335">
    <property type="entry name" value="S-adenosyl-L-methionine-dependent methyltransferases"/>
    <property type="match status" value="1"/>
</dbReference>
<dbReference type="SUPFAM" id="SSF46785">
    <property type="entry name" value="Winged helix' DNA-binding domain"/>
    <property type="match status" value="1"/>
</dbReference>
<dbReference type="PROSITE" id="PS51683">
    <property type="entry name" value="SAM_OMT_II"/>
    <property type="match status" value="1"/>
</dbReference>